<organism>
    <name type="scientific">Bacillus velezensis (strain DSM 23117 / BGSC 10A6 / LMG 26770 / FZB42)</name>
    <name type="common">Bacillus amyloliquefaciens subsp. plantarum</name>
    <dbReference type="NCBI Taxonomy" id="326423"/>
    <lineage>
        <taxon>Bacteria</taxon>
        <taxon>Bacillati</taxon>
        <taxon>Bacillota</taxon>
        <taxon>Bacilli</taxon>
        <taxon>Bacillales</taxon>
        <taxon>Bacillaceae</taxon>
        <taxon>Bacillus</taxon>
        <taxon>Bacillus amyloliquefaciens group</taxon>
    </lineage>
</organism>
<proteinExistence type="inferred from homology"/>
<feature type="chain" id="PRO_0000384017" description="Lactate utilization protein A">
    <location>
        <begin position="1"/>
        <end position="238"/>
    </location>
</feature>
<protein>
    <recommendedName>
        <fullName evidence="1">Lactate utilization protein A</fullName>
    </recommendedName>
</protein>
<dbReference type="EMBL" id="CP000560">
    <property type="protein sequence ID" value="ABS75478.1"/>
    <property type="molecule type" value="Genomic_DNA"/>
</dbReference>
<dbReference type="RefSeq" id="WP_007613889.1">
    <property type="nucleotide sequence ID" value="NC_009725.2"/>
</dbReference>
<dbReference type="SMR" id="A7Z902"/>
<dbReference type="GeneID" id="93082292"/>
<dbReference type="KEGG" id="bay:RBAM_031470"/>
<dbReference type="HOGENOM" id="CLU_023081_1_0_9"/>
<dbReference type="Proteomes" id="UP000001120">
    <property type="component" value="Chromosome"/>
</dbReference>
<dbReference type="GO" id="GO:0005829">
    <property type="term" value="C:cytosol"/>
    <property type="evidence" value="ECO:0007669"/>
    <property type="project" value="TreeGrafter"/>
</dbReference>
<dbReference type="GO" id="GO:0016491">
    <property type="term" value="F:oxidoreductase activity"/>
    <property type="evidence" value="ECO:0007669"/>
    <property type="project" value="UniProtKB-ARBA"/>
</dbReference>
<dbReference type="GO" id="GO:0006089">
    <property type="term" value="P:lactate metabolic process"/>
    <property type="evidence" value="ECO:0007669"/>
    <property type="project" value="UniProtKB-UniRule"/>
</dbReference>
<dbReference type="HAMAP" id="MF_02105">
    <property type="entry name" value="LutA"/>
    <property type="match status" value="1"/>
</dbReference>
<dbReference type="InterPro" id="IPR004017">
    <property type="entry name" value="Cys_rich_dom"/>
</dbReference>
<dbReference type="InterPro" id="IPR022822">
    <property type="entry name" value="LutA"/>
</dbReference>
<dbReference type="PANTHER" id="PTHR30296:SF0">
    <property type="entry name" value="LACTATE UTILIZATION PROTEIN A"/>
    <property type="match status" value="1"/>
</dbReference>
<dbReference type="PANTHER" id="PTHR30296">
    <property type="entry name" value="UNCHARACTERIZED PROTEIN YKGE"/>
    <property type="match status" value="1"/>
</dbReference>
<dbReference type="Pfam" id="PF02754">
    <property type="entry name" value="CCG"/>
    <property type="match status" value="2"/>
</dbReference>
<sequence>MKVSLFVTCLVDMFQTNVGKATVEVLERLGCEVDFPEGQICCGQPAYNSGYVTDAKKAMKRMIAAFEEAEYVVSPSGSCTTMFREYPHLFQDDPKWAAKAQQLADKTYELTDFIVNVLGVEDVGAVLHKKATVHTSCHMTRLLGVSEEPMKLLRHVKGLELTALPGKHQCCGFGGTFSVKMAQISEQMVDEKVACVEDTEAEVLIGADCGCLMNIGGRLDRKDKNVRVMHIAEVLNSR</sequence>
<gene>
    <name evidence="1" type="primary">lutA</name>
    <name type="synonym">yvfV</name>
    <name type="ordered locus">RBAM_031470</name>
</gene>
<evidence type="ECO:0000255" key="1">
    <source>
        <dbReference type="HAMAP-Rule" id="MF_02105"/>
    </source>
</evidence>
<reference key="1">
    <citation type="journal article" date="2007" name="Nat. Biotechnol.">
        <title>Comparative analysis of the complete genome sequence of the plant growth-promoting bacterium Bacillus amyloliquefaciens FZB42.</title>
        <authorList>
            <person name="Chen X.H."/>
            <person name="Koumoutsi A."/>
            <person name="Scholz R."/>
            <person name="Eisenreich A."/>
            <person name="Schneider K."/>
            <person name="Heinemeyer I."/>
            <person name="Morgenstern B."/>
            <person name="Voss B."/>
            <person name="Hess W.R."/>
            <person name="Reva O."/>
            <person name="Junge H."/>
            <person name="Voigt B."/>
            <person name="Jungblut P.R."/>
            <person name="Vater J."/>
            <person name="Suessmuth R."/>
            <person name="Liesegang H."/>
            <person name="Strittmatter A."/>
            <person name="Gottschalk G."/>
            <person name="Borriss R."/>
        </authorList>
    </citation>
    <scope>NUCLEOTIDE SEQUENCE [LARGE SCALE GENOMIC DNA]</scope>
    <source>
        <strain>DSM 23117 / BGSC 10A6 / LMG 26770 / FZB42</strain>
    </source>
</reference>
<accession>A7Z902</accession>
<comment type="function">
    <text evidence="1">Is involved in L-lactate degradation and allows cells to grow with lactate as the sole carbon source.</text>
</comment>
<comment type="similarity">
    <text evidence="1">Belongs to the LutA/YkgE family.</text>
</comment>
<name>LUTA_BACVZ</name>